<accession>P0CF18</accession>
<accession>D6VZQ8</accession>
<accession>Q3E7C0</accession>
<accession>Q6B308</accession>
<accession>Q6WV01</accession>
<comment type="caution">
    <text evidence="2">Could be the product of a pseudogene. This is the C-terminal part of a putative glutamine--fructose-6-phosphate aminotransferase. Strain S288c has a frameshift in position 258, which disrupts the gene coding for this protein and produces two ORFs YMR084W and YMR085W. A contiguous sequence for this protein can be found in strain YJM789 (AC A6ZME2).</text>
</comment>
<protein>
    <recommendedName>
        <fullName>Uncharacterized protein YMR085W</fullName>
    </recommendedName>
</protein>
<sequence length="432" mass="48502">MEFYLSSDCASLARYVSKVVYLEDNDIAHIYDGELHIHCSKIGSEDFSFRTVQKLELELSKIKKGPYDNFMQKEIYEQCETTKNVMRGRVDAFTNRVVLGGLENWLTELRRAKRIIMIASKASFHSCLAARPIFEELMEVPVNVELALDFVDRNCCIFRNDVCIFVSRSGETTDTINALNYCIKKEAVTIGVVNCSGSSISRFTHCGVHTNTGPEKGIATTKSYTSQYIALVMIALWMSEDLVSKIERRKEIIQALTIVPSQIKEVLELEPLIIELCDKKLKQHDTFLLLGRGYQFASALEGASKMKEISYVHSESILTNELGHRVLAVASDNPPIIAFATKDAFSPKIASCIDQIIERKGNPIIICNKGHKIWEQDKQKGNVVTLEVPQTVDCLQGILNVIPLQLISYWLAIKKDIGVDLPRDSAMSAPDI</sequence>
<reference key="1">
    <citation type="journal article" date="1997" name="Nature">
        <title>The nucleotide sequence of Saccharomyces cerevisiae chromosome XIII.</title>
        <authorList>
            <person name="Bowman S."/>
            <person name="Churcher C.M."/>
            <person name="Badcock K."/>
            <person name="Brown D."/>
            <person name="Chillingworth T."/>
            <person name="Connor R."/>
            <person name="Dedman K."/>
            <person name="Devlin K."/>
            <person name="Gentles S."/>
            <person name="Hamlin N."/>
            <person name="Hunt S."/>
            <person name="Jagels K."/>
            <person name="Lye G."/>
            <person name="Moule S."/>
            <person name="Odell C."/>
            <person name="Pearson D."/>
            <person name="Rajandream M.A."/>
            <person name="Rice P."/>
            <person name="Skelton J."/>
            <person name="Walsh S.V."/>
            <person name="Whitehead S."/>
            <person name="Barrell B.G."/>
        </authorList>
    </citation>
    <scope>NUCLEOTIDE SEQUENCE [LARGE SCALE GENOMIC DNA]</scope>
    <source>
        <strain>ATCC 204508 / S288c</strain>
    </source>
</reference>
<reference key="2">
    <citation type="journal article" date="2014" name="G3 (Bethesda)">
        <title>The reference genome sequence of Saccharomyces cerevisiae: Then and now.</title>
        <authorList>
            <person name="Engel S.R."/>
            <person name="Dietrich F.S."/>
            <person name="Fisk D.G."/>
            <person name="Binkley G."/>
            <person name="Balakrishnan R."/>
            <person name="Costanzo M.C."/>
            <person name="Dwight S.S."/>
            <person name="Hitz B.C."/>
            <person name="Karra K."/>
            <person name="Nash R.S."/>
            <person name="Weng S."/>
            <person name="Wong E.D."/>
            <person name="Lloyd P."/>
            <person name="Skrzypek M.S."/>
            <person name="Miyasato S.R."/>
            <person name="Simison M."/>
            <person name="Cherry J.M."/>
        </authorList>
    </citation>
    <scope>GENOME REANNOTATION</scope>
    <source>
        <strain>ATCC 204508 / S288c</strain>
    </source>
</reference>
<reference key="3">
    <citation type="journal article" date="2003" name="Genome Biol.">
        <title>Reinvestigation of the Saccharomyces cerevisiae genome annotation by comparison to the genome of a related fungus: Ashbya gossypii.</title>
        <authorList>
            <person name="Brachat S."/>
            <person name="Dietrich F.S."/>
            <person name="Voegeli S."/>
            <person name="Zhang Z."/>
            <person name="Stuart L."/>
            <person name="Lerch A."/>
            <person name="Gates K."/>
            <person name="Gaffney T.D."/>
            <person name="Philippsen P."/>
        </authorList>
    </citation>
    <scope>NUCLEOTIDE SEQUENCE [GENOMIC DNA] OF 1-11</scope>
    <scope>CONFIRMATION OF FRAMESHIFT</scope>
    <source>
        <strain>ATCC 204511 / S288c / AB972</strain>
    </source>
</reference>
<dbReference type="EMBL" id="Z49259">
    <property type="status" value="NOT_ANNOTATED_CDS"/>
    <property type="molecule type" value="Genomic_DNA"/>
</dbReference>
<dbReference type="EMBL" id="AY268137">
    <property type="protein sequence ID" value="AAR26284.1"/>
    <property type="molecule type" value="Genomic_DNA"/>
</dbReference>
<dbReference type="EMBL" id="BK006946">
    <property type="protein sequence ID" value="DAA09982.1"/>
    <property type="molecule type" value="Genomic_DNA"/>
</dbReference>
<dbReference type="RefSeq" id="NP_013802.1">
    <property type="nucleotide sequence ID" value="NM_001182584.1"/>
</dbReference>
<dbReference type="SMR" id="P0CF18"/>
<dbReference type="BioGRID" id="35260">
    <property type="interactions" value="13"/>
</dbReference>
<dbReference type="FunCoup" id="P0CF18">
    <property type="interactions" value="50"/>
</dbReference>
<dbReference type="STRING" id="4932.YMR085W"/>
<dbReference type="PaxDb" id="4932-YMR085W"/>
<dbReference type="EnsemblFungi" id="YMR085W_mRNA">
    <property type="protein sequence ID" value="YMR085W"/>
    <property type="gene ID" value="YMR085W"/>
</dbReference>
<dbReference type="GeneID" id="855109"/>
<dbReference type="KEGG" id="sce:YMR085W"/>
<dbReference type="AGR" id="SGD:S000004690"/>
<dbReference type="SGD" id="S000004690">
    <property type="gene designation" value="YMR085W"/>
</dbReference>
<dbReference type="VEuPathDB" id="FungiDB:YMR085W"/>
<dbReference type="eggNOG" id="KOG1268">
    <property type="taxonomic scope" value="Eukaryota"/>
</dbReference>
<dbReference type="GeneTree" id="ENSGT00940000173234"/>
<dbReference type="HOGENOM" id="CLU_012520_2_3_1"/>
<dbReference type="InParanoid" id="P0CF18"/>
<dbReference type="OMA" id="QSFYVMA"/>
<dbReference type="OrthoDB" id="15235at2759"/>
<dbReference type="BioCyc" id="YEAST:G3O-32785-MONOMER"/>
<dbReference type="Reactome" id="R-SCE-446210">
    <property type="pathway name" value="Synthesis of UDP-N-acetyl-glucosamine"/>
</dbReference>
<dbReference type="BioGRID-ORCS" id="855109">
    <property type="hits" value="0 hits in 10 CRISPR screens"/>
</dbReference>
<dbReference type="PRO" id="PR:P0CF18"/>
<dbReference type="Proteomes" id="UP000002311">
    <property type="component" value="Chromosome XIII"/>
</dbReference>
<dbReference type="RNAct" id="P0CF18">
    <property type="molecule type" value="protein"/>
</dbReference>
<dbReference type="GO" id="GO:0097367">
    <property type="term" value="F:carbohydrate derivative binding"/>
    <property type="evidence" value="ECO:0007669"/>
    <property type="project" value="InterPro"/>
</dbReference>
<dbReference type="GO" id="GO:0004360">
    <property type="term" value="F:glutamine-fructose-6-phosphate transaminase (isomerizing) activity"/>
    <property type="evidence" value="ECO:0000318"/>
    <property type="project" value="GO_Central"/>
</dbReference>
<dbReference type="GO" id="GO:0006031">
    <property type="term" value="P:chitin biosynthetic process"/>
    <property type="evidence" value="ECO:0000318"/>
    <property type="project" value="GO_Central"/>
</dbReference>
<dbReference type="GO" id="GO:0006002">
    <property type="term" value="P:fructose 6-phosphate metabolic process"/>
    <property type="evidence" value="ECO:0000318"/>
    <property type="project" value="GO_Central"/>
</dbReference>
<dbReference type="GO" id="GO:0006487">
    <property type="term" value="P:protein N-linked glycosylation"/>
    <property type="evidence" value="ECO:0000318"/>
    <property type="project" value="GO_Central"/>
</dbReference>
<dbReference type="GO" id="GO:0006047">
    <property type="term" value="P:UDP-N-acetylglucosamine metabolic process"/>
    <property type="evidence" value="ECO:0000318"/>
    <property type="project" value="GO_Central"/>
</dbReference>
<dbReference type="CDD" id="cd05008">
    <property type="entry name" value="SIS_GlmS_GlmD_1"/>
    <property type="match status" value="1"/>
</dbReference>
<dbReference type="CDD" id="cd05009">
    <property type="entry name" value="SIS_GlmS_GlmD_2"/>
    <property type="match status" value="1"/>
</dbReference>
<dbReference type="FunFam" id="3.40.50.10490:FF:000001">
    <property type="entry name" value="Glutamine--fructose-6-phosphate aminotransferase [isomerizing]"/>
    <property type="match status" value="1"/>
</dbReference>
<dbReference type="FunFam" id="3.40.50.10490:FF:000002">
    <property type="entry name" value="Glutamine--fructose-6-phosphate aminotransferase [isomerizing]"/>
    <property type="match status" value="1"/>
</dbReference>
<dbReference type="Gene3D" id="3.40.50.10490">
    <property type="entry name" value="Glucose-6-phosphate isomerase like protein, domain 1"/>
    <property type="match status" value="2"/>
</dbReference>
<dbReference type="InterPro" id="IPR035466">
    <property type="entry name" value="GlmS/AgaS_SIS"/>
</dbReference>
<dbReference type="InterPro" id="IPR035490">
    <property type="entry name" value="GlmS/FrlB_SIS"/>
</dbReference>
<dbReference type="InterPro" id="IPR001347">
    <property type="entry name" value="SIS_dom"/>
</dbReference>
<dbReference type="InterPro" id="IPR046348">
    <property type="entry name" value="SIS_dom_sf"/>
</dbReference>
<dbReference type="PANTHER" id="PTHR10937">
    <property type="entry name" value="GLUCOSAMINE--FRUCTOSE-6-PHOSPHATE AMINOTRANSFERASE, ISOMERIZING"/>
    <property type="match status" value="1"/>
</dbReference>
<dbReference type="PANTHER" id="PTHR10937:SF0">
    <property type="entry name" value="GLUTAMINE--FRUCTOSE-6-PHOSPHATE TRANSAMINASE (ISOMERIZING)"/>
    <property type="match status" value="1"/>
</dbReference>
<dbReference type="Pfam" id="PF01380">
    <property type="entry name" value="SIS"/>
    <property type="match status" value="2"/>
</dbReference>
<dbReference type="SUPFAM" id="SSF53697">
    <property type="entry name" value="SIS domain"/>
    <property type="match status" value="1"/>
</dbReference>
<dbReference type="PROSITE" id="PS51464">
    <property type="entry name" value="SIS"/>
    <property type="match status" value="2"/>
</dbReference>
<keyword id="KW-1185">Reference proteome</keyword>
<keyword id="KW-0677">Repeat</keyword>
<gene>
    <name type="ordered locus">YMR085W</name>
</gene>
<evidence type="ECO:0000255" key="1">
    <source>
        <dbReference type="PROSITE-ProRule" id="PRU00797"/>
    </source>
</evidence>
<evidence type="ECO:0000305" key="2"/>
<proteinExistence type="uncertain"/>
<feature type="chain" id="PRO_0000393382" description="Uncharacterized protein YMR085W">
    <location>
        <begin position="1"/>
        <end position="432"/>
    </location>
</feature>
<feature type="domain" description="SIS 1" evidence="1">
    <location>
        <begin position="105"/>
        <end position="244"/>
    </location>
</feature>
<feature type="domain" description="SIS 2" evidence="1">
    <location>
        <begin position="277"/>
        <end position="422"/>
    </location>
</feature>
<organism>
    <name type="scientific">Saccharomyces cerevisiae (strain ATCC 204508 / S288c)</name>
    <name type="common">Baker's yeast</name>
    <dbReference type="NCBI Taxonomy" id="559292"/>
    <lineage>
        <taxon>Eukaryota</taxon>
        <taxon>Fungi</taxon>
        <taxon>Dikarya</taxon>
        <taxon>Ascomycota</taxon>
        <taxon>Saccharomycotina</taxon>
        <taxon>Saccharomycetes</taxon>
        <taxon>Saccharomycetales</taxon>
        <taxon>Saccharomycetaceae</taxon>
        <taxon>Saccharomyces</taxon>
    </lineage>
</organism>
<name>YM085_YEAST</name>